<sequence length="585" mass="67113">MAEAATGFLEQLKSCIVWSWTYLWTVWFFIVLFLVYILRVPLKINDNLSTVSMFLNTLTPKFYVALTGTSSLISGLILIFEWWYFRKYGTSFIEQVSVSHLRPLLGGVDNNSSNNSNSSNGDSDSNRQSVSECKVWRNPLNLFRGAEYNRYTWVTGREPLTYYDMNLSAQDHQTFFTCDSDHLRPADAIMQKAWRERNPQARISAAHEALEINEIRSRVEVPLIASSTIWEIKLLPKCATAYILLAEEEATTIAEAEKLFKQALKAGDGCYRRSQQLQHHGSQYEAQHRRDTNVLVYIKRRLAMCARRLGRTREAVKMMRDLMKEFPLLSMFNIHENLLEALLELQAYADVQAVLAKYDDISLPKSATICYTAALLKARAVSDKFSPEAASRRGLSTAEMNAVEAIHRAVEFNPHVPKYLLEMKSLILPPEHILKRGDSEAIAYAFFHLAHWKRVEGALNLLHCTWEGTFRMIPYPLEKGHLFYPYPICTETADRELLPSFHEVSVYPKKELPFFILFTAGLCSFTAMLALLTHQFPELMGVFAKAMIDIFCSAEFRDWNCKSIFMCVEDELEIPPAPQSQHFQN</sequence>
<organism>
    <name type="scientific">Nomascus leucogenys</name>
    <name type="common">Northern white-cheeked gibbon</name>
    <name type="synonym">Hylobates leucogenys</name>
    <dbReference type="NCBI Taxonomy" id="61853"/>
    <lineage>
        <taxon>Eukaryota</taxon>
        <taxon>Metazoa</taxon>
        <taxon>Chordata</taxon>
        <taxon>Craniata</taxon>
        <taxon>Vertebrata</taxon>
        <taxon>Euteleostomi</taxon>
        <taxon>Mammalia</taxon>
        <taxon>Eutheria</taxon>
        <taxon>Euarchontoglires</taxon>
        <taxon>Primates</taxon>
        <taxon>Haplorrhini</taxon>
        <taxon>Catarrhini</taxon>
        <taxon>Hylobatidae</taxon>
        <taxon>Nomascus</taxon>
    </lineage>
</organism>
<comment type="subcellular location">
    <subcellularLocation>
        <location evidence="3">Membrane</location>
        <topology evidence="3">Multi-pass membrane protein</topology>
    </subcellularLocation>
</comment>
<comment type="similarity">
    <text evidence="3">Belongs to the ST7 family.</text>
</comment>
<name>ST7_NOMLE</name>
<keyword id="KW-0325">Glycoprotein</keyword>
<keyword id="KW-0472">Membrane</keyword>
<keyword id="KW-0597">Phosphoprotein</keyword>
<keyword id="KW-1185">Reference proteome</keyword>
<keyword id="KW-0812">Transmembrane</keyword>
<keyword id="KW-1133">Transmembrane helix</keyword>
<reference key="1">
    <citation type="submission" date="2006-09" db="EMBL/GenBank/DDBJ databases">
        <title>NISC comparative sequencing initiative.</title>
        <authorList>
            <person name="Antonellis A."/>
            <person name="Ayele K."/>
            <person name="Benjamin B."/>
            <person name="Blakesley R.W."/>
            <person name="Boakye A."/>
            <person name="Bouffard G.G."/>
            <person name="Brinkley C."/>
            <person name="Brooks S."/>
            <person name="Chu G."/>
            <person name="Coleman H."/>
            <person name="Engle J."/>
            <person name="Gestole M."/>
            <person name="Greene A."/>
            <person name="Guan X."/>
            <person name="Gupta J."/>
            <person name="Haghighi P."/>
            <person name="Han J."/>
            <person name="Hansen N."/>
            <person name="Ho S.-L."/>
            <person name="Hu P."/>
            <person name="Hunter G."/>
            <person name="Hurle B."/>
            <person name="Idol J.R."/>
            <person name="Kwong P."/>
            <person name="Laric P."/>
            <person name="Larson S."/>
            <person name="Lee-Lin S.-Q."/>
            <person name="Legaspi R."/>
            <person name="Madden M."/>
            <person name="Maduro Q.L."/>
            <person name="Maduro V.B."/>
            <person name="Margulies E.H."/>
            <person name="Masiello C."/>
            <person name="Maskeri B."/>
            <person name="McDowell J."/>
            <person name="Mojidi H.A."/>
            <person name="Mullikin J.C."/>
            <person name="Oestreicher J.S."/>
            <person name="Park M."/>
            <person name="Portnoy M.E."/>
            <person name="Prasad A."/>
            <person name="Puri O."/>
            <person name="Reddix-Dugue N."/>
            <person name="Schandler K."/>
            <person name="Schueler M.G."/>
            <person name="Sison C."/>
            <person name="Stantripop S."/>
            <person name="Stephen E."/>
            <person name="Taye A."/>
            <person name="Thomas J.W."/>
            <person name="Thomas P.J."/>
            <person name="Tsipouri V."/>
            <person name="Ung L."/>
            <person name="Vogt J.L."/>
            <person name="Wetherby K.D."/>
            <person name="Young A."/>
            <person name="Green E.D."/>
        </authorList>
    </citation>
    <scope>NUCLEOTIDE SEQUENCE [LARGE SCALE GENOMIC DNA]</scope>
</reference>
<protein>
    <recommendedName>
        <fullName>Suppressor of tumorigenicity 7 protein</fullName>
    </recommendedName>
</protein>
<evidence type="ECO:0000250" key="1">
    <source>
        <dbReference type="UniProtKB" id="Q9NRC1"/>
    </source>
</evidence>
<evidence type="ECO:0000255" key="2"/>
<evidence type="ECO:0000305" key="3"/>
<dbReference type="EMBL" id="DP000194">
    <property type="protein sequence ID" value="ABJ08864.1"/>
    <property type="molecule type" value="Genomic_DNA"/>
</dbReference>
<dbReference type="RefSeq" id="XP_012367659.2">
    <property type="nucleotide sequence ID" value="XM_012512205.2"/>
</dbReference>
<dbReference type="FunCoup" id="Q07DX8">
    <property type="interactions" value="1335"/>
</dbReference>
<dbReference type="STRING" id="61853.ENSNLEP00000014139"/>
<dbReference type="GlyCosmos" id="Q07DX8">
    <property type="glycosylation" value="1 site, No reported glycans"/>
</dbReference>
<dbReference type="GeneID" id="100598206"/>
<dbReference type="eggNOG" id="KOG3807">
    <property type="taxonomic scope" value="Eukaryota"/>
</dbReference>
<dbReference type="InParanoid" id="Q07DX8"/>
<dbReference type="OrthoDB" id="5914722at2759"/>
<dbReference type="Proteomes" id="UP000001073">
    <property type="component" value="Unplaced"/>
</dbReference>
<dbReference type="GO" id="GO:0016020">
    <property type="term" value="C:membrane"/>
    <property type="evidence" value="ECO:0007669"/>
    <property type="project" value="UniProtKB-SubCell"/>
</dbReference>
<dbReference type="CDD" id="cd11557">
    <property type="entry name" value="ST7"/>
    <property type="match status" value="1"/>
</dbReference>
<dbReference type="InterPro" id="IPR007311">
    <property type="entry name" value="ST7"/>
</dbReference>
<dbReference type="PANTHER" id="PTHR12745">
    <property type="entry name" value="SUPPRESSION OF TUMORIGENICITY 7"/>
    <property type="match status" value="1"/>
</dbReference>
<dbReference type="PANTHER" id="PTHR12745:SF10">
    <property type="entry name" value="SUPPRESSOR OF TUMORIGENICITY 7 PROTEIN"/>
    <property type="match status" value="1"/>
</dbReference>
<dbReference type="Pfam" id="PF04184">
    <property type="entry name" value="ST7"/>
    <property type="match status" value="1"/>
</dbReference>
<feature type="chain" id="PRO_0000339203" description="Suppressor of tumorigenicity 7 protein">
    <location>
        <begin position="1"/>
        <end position="585"/>
    </location>
</feature>
<feature type="transmembrane region" description="Helical" evidence="2">
    <location>
        <begin position="15"/>
        <end position="35"/>
    </location>
</feature>
<feature type="transmembrane region" description="Helical" evidence="2">
    <location>
        <begin position="62"/>
        <end position="82"/>
    </location>
</feature>
<feature type="transmembrane region" description="Helical" evidence="2">
    <location>
        <begin position="512"/>
        <end position="532"/>
    </location>
</feature>
<feature type="modified residue" description="Phosphoserine" evidence="1">
    <location>
        <position position="386"/>
    </location>
</feature>
<feature type="glycosylation site" description="N-linked (GlcNAc...) asparagine" evidence="2">
    <location>
        <position position="47"/>
    </location>
</feature>
<gene>
    <name type="primary">ST7</name>
</gene>
<accession>Q07DX8</accession>
<proteinExistence type="inferred from homology"/>